<keyword id="KW-0143">Chaperone</keyword>
<keyword id="KW-0963">Cytoplasm</keyword>
<keyword id="KW-0690">Ribosome biogenesis</keyword>
<keyword id="KW-0698">rRNA processing</keyword>
<reference key="1">
    <citation type="journal article" date="2009" name="PLoS Genet.">
        <title>Organised genome dynamics in the Escherichia coli species results in highly diverse adaptive paths.</title>
        <authorList>
            <person name="Touchon M."/>
            <person name="Hoede C."/>
            <person name="Tenaillon O."/>
            <person name="Barbe V."/>
            <person name="Baeriswyl S."/>
            <person name="Bidet P."/>
            <person name="Bingen E."/>
            <person name="Bonacorsi S."/>
            <person name="Bouchier C."/>
            <person name="Bouvet O."/>
            <person name="Calteau A."/>
            <person name="Chiapello H."/>
            <person name="Clermont O."/>
            <person name="Cruveiller S."/>
            <person name="Danchin A."/>
            <person name="Diard M."/>
            <person name="Dossat C."/>
            <person name="Karoui M.E."/>
            <person name="Frapy E."/>
            <person name="Garry L."/>
            <person name="Ghigo J.M."/>
            <person name="Gilles A.M."/>
            <person name="Johnson J."/>
            <person name="Le Bouguenec C."/>
            <person name="Lescat M."/>
            <person name="Mangenot S."/>
            <person name="Martinez-Jehanne V."/>
            <person name="Matic I."/>
            <person name="Nassif X."/>
            <person name="Oztas S."/>
            <person name="Petit M.A."/>
            <person name="Pichon C."/>
            <person name="Rouy Z."/>
            <person name="Ruf C.S."/>
            <person name="Schneider D."/>
            <person name="Tourret J."/>
            <person name="Vacherie B."/>
            <person name="Vallenet D."/>
            <person name="Medigue C."/>
            <person name="Rocha E.P.C."/>
            <person name="Denamur E."/>
        </authorList>
    </citation>
    <scope>NUCLEOTIDE SEQUENCE [LARGE SCALE GENOMIC DNA]</scope>
    <source>
        <strain>UMN026 / ExPEC</strain>
    </source>
</reference>
<gene>
    <name evidence="1" type="primary">rimM</name>
    <name type="ordered locus">ECUMN_2933</name>
</gene>
<proteinExistence type="inferred from homology"/>
<organism>
    <name type="scientific">Escherichia coli O17:K52:H18 (strain UMN026 / ExPEC)</name>
    <dbReference type="NCBI Taxonomy" id="585056"/>
    <lineage>
        <taxon>Bacteria</taxon>
        <taxon>Pseudomonadati</taxon>
        <taxon>Pseudomonadota</taxon>
        <taxon>Gammaproteobacteria</taxon>
        <taxon>Enterobacterales</taxon>
        <taxon>Enterobacteriaceae</taxon>
        <taxon>Escherichia</taxon>
    </lineage>
</organism>
<comment type="function">
    <text evidence="1">An accessory protein needed during the final step in the assembly of 30S ribosomal subunit, possibly for assembly of the head region. Essential for efficient processing of 16S rRNA. May be needed both before and after RbfA during the maturation of 16S rRNA. It has affinity for free ribosomal 30S subunits but not for 70S ribosomes.</text>
</comment>
<comment type="subunit">
    <text evidence="1">Binds ribosomal protein uS19.</text>
</comment>
<comment type="subcellular location">
    <subcellularLocation>
        <location evidence="1">Cytoplasm</location>
    </subcellularLocation>
</comment>
<comment type="domain">
    <text evidence="1">The PRC barrel domain binds ribosomal protein uS19.</text>
</comment>
<comment type="similarity">
    <text evidence="1">Belongs to the RimM family.</text>
</comment>
<protein>
    <recommendedName>
        <fullName evidence="1">Ribosome maturation factor RimM</fullName>
    </recommendedName>
</protein>
<feature type="chain" id="PRO_1000196558" description="Ribosome maturation factor RimM">
    <location>
        <begin position="1"/>
        <end position="182"/>
    </location>
</feature>
<feature type="domain" description="PRC barrel" evidence="1">
    <location>
        <begin position="102"/>
        <end position="182"/>
    </location>
</feature>
<accession>B7N6J4</accession>
<name>RIMM_ECOLU</name>
<evidence type="ECO:0000255" key="1">
    <source>
        <dbReference type="HAMAP-Rule" id="MF_00014"/>
    </source>
</evidence>
<dbReference type="EMBL" id="CU928163">
    <property type="protein sequence ID" value="CAR14104.1"/>
    <property type="molecule type" value="Genomic_DNA"/>
</dbReference>
<dbReference type="RefSeq" id="WP_000043335.1">
    <property type="nucleotide sequence ID" value="NC_011751.1"/>
</dbReference>
<dbReference type="RefSeq" id="YP_002413628.1">
    <property type="nucleotide sequence ID" value="NC_011751.1"/>
</dbReference>
<dbReference type="SMR" id="B7N6J4"/>
<dbReference type="STRING" id="585056.ECUMN_2933"/>
<dbReference type="GeneID" id="93774458"/>
<dbReference type="KEGG" id="eum:ECUMN_2933"/>
<dbReference type="PATRIC" id="fig|585056.7.peg.3114"/>
<dbReference type="HOGENOM" id="CLU_077636_1_0_6"/>
<dbReference type="Proteomes" id="UP000007097">
    <property type="component" value="Chromosome"/>
</dbReference>
<dbReference type="GO" id="GO:0005737">
    <property type="term" value="C:cytoplasm"/>
    <property type="evidence" value="ECO:0007669"/>
    <property type="project" value="UniProtKB-SubCell"/>
</dbReference>
<dbReference type="GO" id="GO:0005840">
    <property type="term" value="C:ribosome"/>
    <property type="evidence" value="ECO:0007669"/>
    <property type="project" value="InterPro"/>
</dbReference>
<dbReference type="GO" id="GO:0043022">
    <property type="term" value="F:ribosome binding"/>
    <property type="evidence" value="ECO:0007669"/>
    <property type="project" value="InterPro"/>
</dbReference>
<dbReference type="GO" id="GO:0042274">
    <property type="term" value="P:ribosomal small subunit biogenesis"/>
    <property type="evidence" value="ECO:0007669"/>
    <property type="project" value="UniProtKB-UniRule"/>
</dbReference>
<dbReference type="GO" id="GO:0006364">
    <property type="term" value="P:rRNA processing"/>
    <property type="evidence" value="ECO:0007669"/>
    <property type="project" value="UniProtKB-UniRule"/>
</dbReference>
<dbReference type="FunFam" id="2.30.30.240:FF:000001">
    <property type="entry name" value="Ribosome maturation factor RimM"/>
    <property type="match status" value="1"/>
</dbReference>
<dbReference type="FunFam" id="2.40.30.60:FF:000001">
    <property type="entry name" value="Ribosome maturation factor RimM"/>
    <property type="match status" value="1"/>
</dbReference>
<dbReference type="Gene3D" id="2.30.30.240">
    <property type="entry name" value="PRC-barrel domain"/>
    <property type="match status" value="1"/>
</dbReference>
<dbReference type="Gene3D" id="2.40.30.60">
    <property type="entry name" value="RimM"/>
    <property type="match status" value="1"/>
</dbReference>
<dbReference type="HAMAP" id="MF_00014">
    <property type="entry name" value="Ribosome_mat_RimM"/>
    <property type="match status" value="1"/>
</dbReference>
<dbReference type="InterPro" id="IPR011033">
    <property type="entry name" value="PRC_barrel-like_sf"/>
</dbReference>
<dbReference type="InterPro" id="IPR056792">
    <property type="entry name" value="PRC_RimM"/>
</dbReference>
<dbReference type="InterPro" id="IPR011961">
    <property type="entry name" value="RimM"/>
</dbReference>
<dbReference type="InterPro" id="IPR002676">
    <property type="entry name" value="RimM_N"/>
</dbReference>
<dbReference type="InterPro" id="IPR036976">
    <property type="entry name" value="RimM_N_sf"/>
</dbReference>
<dbReference type="InterPro" id="IPR009000">
    <property type="entry name" value="Transl_B-barrel_sf"/>
</dbReference>
<dbReference type="NCBIfam" id="TIGR02273">
    <property type="entry name" value="16S_RimM"/>
    <property type="match status" value="1"/>
</dbReference>
<dbReference type="PANTHER" id="PTHR33692">
    <property type="entry name" value="RIBOSOME MATURATION FACTOR RIMM"/>
    <property type="match status" value="1"/>
</dbReference>
<dbReference type="PANTHER" id="PTHR33692:SF1">
    <property type="entry name" value="RIBOSOME MATURATION FACTOR RIMM"/>
    <property type="match status" value="1"/>
</dbReference>
<dbReference type="Pfam" id="PF24986">
    <property type="entry name" value="PRC_RimM"/>
    <property type="match status" value="1"/>
</dbReference>
<dbReference type="Pfam" id="PF01782">
    <property type="entry name" value="RimM"/>
    <property type="match status" value="1"/>
</dbReference>
<dbReference type="SUPFAM" id="SSF50346">
    <property type="entry name" value="PRC-barrel domain"/>
    <property type="match status" value="1"/>
</dbReference>
<dbReference type="SUPFAM" id="SSF50447">
    <property type="entry name" value="Translation proteins"/>
    <property type="match status" value="1"/>
</dbReference>
<sequence length="182" mass="20605">MSKQLTAQAPVDPIVLGKMGSSYGIRGWLRVFSSTEDAESIFDYQPWFIQKAGQWQQVQLESWKHHNQDMIIKLKGVDDRDAANLLTNCEIVVDSSQLPQLEEGDYYWKDLMGCQVVTTEGYDLGKVVDMMETGSNDVLVIKANLKDAFGIKERLVPFLDGQVIKKVDLTTRSIEVDWDPGF</sequence>